<gene>
    <name type="primary">petC</name>
</gene>
<accession>P26291</accession>
<comment type="function">
    <text evidence="1">Component of the cytochrome b6-f complex, which mediates electron transfer between photosystem II (PSII) and photosystem I (PSI), cyclic electron flow around PSI, and state transitions.</text>
</comment>
<comment type="catalytic activity">
    <reaction>
        <text>2 oxidized [plastocyanin] + a plastoquinol + 2 H(+)(in) = 2 reduced [plastocyanin] + a plastoquinone + 4 H(+)(out)</text>
        <dbReference type="Rhea" id="RHEA:22148"/>
        <dbReference type="Rhea" id="RHEA-COMP:9561"/>
        <dbReference type="Rhea" id="RHEA-COMP:9562"/>
        <dbReference type="Rhea" id="RHEA-COMP:10039"/>
        <dbReference type="Rhea" id="RHEA-COMP:10040"/>
        <dbReference type="ChEBI" id="CHEBI:15378"/>
        <dbReference type="ChEBI" id="CHEBI:17757"/>
        <dbReference type="ChEBI" id="CHEBI:29036"/>
        <dbReference type="ChEBI" id="CHEBI:49552"/>
        <dbReference type="ChEBI" id="CHEBI:62192"/>
        <dbReference type="EC" id="7.1.1.6"/>
    </reaction>
</comment>
<comment type="cofactor">
    <cofactor evidence="3">
        <name>[2Fe-2S] cluster</name>
        <dbReference type="ChEBI" id="CHEBI:190135"/>
    </cofactor>
    <text evidence="3">Binds 1 [2Fe-2S] cluster per subunit.</text>
</comment>
<comment type="subunit">
    <text evidence="1">The 4 large subunits of the cytochrome b6-f complex are cytochrome b6, subunit IV (17 kDa polypeptide, petD), cytochrome f and the Rieske protein, while the 4 small subunits are petG, petL, petM and petN. The complex functions as a dimer (By similarity).</text>
</comment>
<comment type="subcellular location">
    <subcellularLocation>
        <location evidence="1">Plastid</location>
        <location evidence="1">Chloroplast thylakoid membrane</location>
        <topology evidence="1">Single-pass membrane protein</topology>
    </subcellularLocation>
    <text evidence="1">The transmembrane helix obliquely spans the membrane in one monomer, and its extrinsic C-terminal domain is part of the other monomer.</text>
</comment>
<comment type="miscellaneous">
    <text>This protein is 1 of 2 subunits of the cytochrome b6-f complex that are encoded in the nucleus.</text>
</comment>
<comment type="miscellaneous">
    <text>The Rieske iron-sulfur protein is a high potential 2Fe-2S protein.</text>
</comment>
<comment type="similarity">
    <text evidence="4">Belongs to the Rieske iron-sulfur protein family.</text>
</comment>
<reference key="1">
    <citation type="journal article" date="1992" name="Plant Mol. Biol.">
        <title>Import of the precursor of the chloroplast Rieske iron-sulphur protein by pea chloroplasts.</title>
        <authorList>
            <person name="Salter A.H."/>
            <person name="Newman B.J."/>
            <person name="Napier J.A."/>
            <person name="Gray J.C."/>
        </authorList>
    </citation>
    <scope>NUCLEOTIDE SEQUENCE [MRNA]</scope>
</reference>
<evidence type="ECO:0000250" key="1"/>
<evidence type="ECO:0000255" key="2"/>
<evidence type="ECO:0000255" key="3">
    <source>
        <dbReference type="PROSITE-ProRule" id="PRU00628"/>
    </source>
</evidence>
<evidence type="ECO:0000305" key="4"/>
<protein>
    <recommendedName>
        <fullName>Cytochrome b6-f complex iron-sulfur subunit, chloroplastic</fullName>
        <ecNumber>7.1.1.6</ecNumber>
    </recommendedName>
    <alternativeName>
        <fullName>Plastohydroquinone:plastocyanin oxidoreductase iron-sulfur protein</fullName>
    </alternativeName>
    <alternativeName>
        <fullName>Rieske iron-sulfur protein</fullName>
        <shortName>ISP</shortName>
        <shortName>RISP</shortName>
    </alternativeName>
</protein>
<dbReference type="EC" id="7.1.1.6"/>
<dbReference type="EMBL" id="X63605">
    <property type="protein sequence ID" value="CAA45151.1"/>
    <property type="molecule type" value="mRNA"/>
</dbReference>
<dbReference type="PIR" id="S26199">
    <property type="entry name" value="S26199"/>
</dbReference>
<dbReference type="SMR" id="P26291"/>
<dbReference type="EnsemblPlants" id="Psat5g267960.1">
    <property type="protein sequence ID" value="Psat5g267960.1.cds"/>
    <property type="gene ID" value="Psat5g267960"/>
</dbReference>
<dbReference type="Gramene" id="Psat5g267960.1">
    <property type="protein sequence ID" value="Psat5g267960.1.cds"/>
    <property type="gene ID" value="Psat5g267960"/>
</dbReference>
<dbReference type="OrthoDB" id="1637982at2759"/>
<dbReference type="GO" id="GO:0009535">
    <property type="term" value="C:chloroplast thylakoid membrane"/>
    <property type="evidence" value="ECO:0007669"/>
    <property type="project" value="UniProtKB-SubCell"/>
</dbReference>
<dbReference type="GO" id="GO:0051537">
    <property type="term" value="F:2 iron, 2 sulfur cluster binding"/>
    <property type="evidence" value="ECO:0007669"/>
    <property type="project" value="UniProtKB-KW"/>
</dbReference>
<dbReference type="GO" id="GO:0046872">
    <property type="term" value="F:metal ion binding"/>
    <property type="evidence" value="ECO:0007669"/>
    <property type="project" value="UniProtKB-KW"/>
</dbReference>
<dbReference type="GO" id="GO:0009496">
    <property type="term" value="F:plastoquinol--plastocyanin reductase activity"/>
    <property type="evidence" value="ECO:0007669"/>
    <property type="project" value="UniProtKB-EC"/>
</dbReference>
<dbReference type="CDD" id="cd03471">
    <property type="entry name" value="Rieske_cytochrome_b6f"/>
    <property type="match status" value="1"/>
</dbReference>
<dbReference type="FunFam" id="1.20.5.700:FF:000002">
    <property type="entry name" value="Cytochrome b6-f complex iron-sulfur subunit"/>
    <property type="match status" value="1"/>
</dbReference>
<dbReference type="FunFam" id="2.102.10.10:FF:000007">
    <property type="entry name" value="Cytochrome b6-f complex iron-sulfur subunit"/>
    <property type="match status" value="1"/>
</dbReference>
<dbReference type="Gene3D" id="2.102.10.10">
    <property type="entry name" value="Rieske [2Fe-2S] iron-sulphur domain"/>
    <property type="match status" value="1"/>
</dbReference>
<dbReference type="Gene3D" id="1.20.5.700">
    <property type="entry name" value="Single helix bin"/>
    <property type="match status" value="1"/>
</dbReference>
<dbReference type="InterPro" id="IPR017941">
    <property type="entry name" value="Rieske_2Fe-2S"/>
</dbReference>
<dbReference type="InterPro" id="IPR036922">
    <property type="entry name" value="Rieske_2Fe-2S_sf"/>
</dbReference>
<dbReference type="InterPro" id="IPR014349">
    <property type="entry name" value="Rieske_Fe-S_prot"/>
</dbReference>
<dbReference type="InterPro" id="IPR005805">
    <property type="entry name" value="Rieske_Fe-S_prot_C"/>
</dbReference>
<dbReference type="NCBIfam" id="NF010001">
    <property type="entry name" value="PRK13474.1"/>
    <property type="match status" value="1"/>
</dbReference>
<dbReference type="PANTHER" id="PTHR10134">
    <property type="entry name" value="CYTOCHROME B-C1 COMPLEX SUBUNIT RIESKE, MITOCHONDRIAL"/>
    <property type="match status" value="1"/>
</dbReference>
<dbReference type="Pfam" id="PF00355">
    <property type="entry name" value="Rieske"/>
    <property type="match status" value="1"/>
</dbReference>
<dbReference type="Pfam" id="PF25471">
    <property type="entry name" value="TM_PetC"/>
    <property type="match status" value="1"/>
</dbReference>
<dbReference type="PRINTS" id="PR00162">
    <property type="entry name" value="RIESKE"/>
</dbReference>
<dbReference type="SUPFAM" id="SSF50022">
    <property type="entry name" value="ISP domain"/>
    <property type="match status" value="1"/>
</dbReference>
<dbReference type="PROSITE" id="PS51296">
    <property type="entry name" value="RIESKE"/>
    <property type="match status" value="1"/>
</dbReference>
<keyword id="KW-0001">2Fe-2S</keyword>
<keyword id="KW-0150">Chloroplast</keyword>
<keyword id="KW-1015">Disulfide bond</keyword>
<keyword id="KW-0249">Electron transport</keyword>
<keyword id="KW-0408">Iron</keyword>
<keyword id="KW-0411">Iron-sulfur</keyword>
<keyword id="KW-0472">Membrane</keyword>
<keyword id="KW-0479">Metal-binding</keyword>
<keyword id="KW-0934">Plastid</keyword>
<keyword id="KW-0793">Thylakoid</keyword>
<keyword id="KW-0809">Transit peptide</keyword>
<keyword id="KW-1278">Translocase</keyword>
<keyword id="KW-0812">Transmembrane</keyword>
<keyword id="KW-1133">Transmembrane helix</keyword>
<keyword id="KW-0813">Transport</keyword>
<proteinExistence type="evidence at transcript level"/>
<feature type="transit peptide" description="Chloroplast" evidence="1">
    <location>
        <begin position="1"/>
        <end position="50"/>
    </location>
</feature>
<feature type="chain" id="PRO_0000030691" description="Cytochrome b6-f complex iron-sulfur subunit, chloroplastic">
    <location>
        <begin position="51"/>
        <end position="230"/>
    </location>
</feature>
<feature type="transmembrane region" description="Helical" evidence="2">
    <location>
        <begin position="72"/>
        <end position="92"/>
    </location>
</feature>
<feature type="domain" description="Rieske" evidence="3">
    <location>
        <begin position="115"/>
        <end position="213"/>
    </location>
</feature>
<feature type="binding site" evidence="3">
    <location>
        <position position="157"/>
    </location>
    <ligand>
        <name>[2Fe-2S] cluster</name>
        <dbReference type="ChEBI" id="CHEBI:190135"/>
    </ligand>
</feature>
<feature type="binding site" evidence="3">
    <location>
        <position position="159"/>
    </location>
    <ligand>
        <name>[2Fe-2S] cluster</name>
        <dbReference type="ChEBI" id="CHEBI:190135"/>
    </ligand>
</feature>
<feature type="binding site" evidence="3">
    <location>
        <position position="175"/>
    </location>
    <ligand>
        <name>[2Fe-2S] cluster</name>
        <dbReference type="ChEBI" id="CHEBI:190135"/>
    </ligand>
</feature>
<feature type="binding site" evidence="3">
    <location>
        <position position="178"/>
    </location>
    <ligand>
        <name>[2Fe-2S] cluster</name>
        <dbReference type="ChEBI" id="CHEBI:190135"/>
    </ligand>
</feature>
<feature type="disulfide bond" evidence="3">
    <location>
        <begin position="162"/>
        <end position="177"/>
    </location>
</feature>
<name>UCRIA_PEA</name>
<organism>
    <name type="scientific">Pisum sativum</name>
    <name type="common">Garden pea</name>
    <name type="synonym">Lathyrus oleraceus</name>
    <dbReference type="NCBI Taxonomy" id="3888"/>
    <lineage>
        <taxon>Eukaryota</taxon>
        <taxon>Viridiplantae</taxon>
        <taxon>Streptophyta</taxon>
        <taxon>Embryophyta</taxon>
        <taxon>Tracheophyta</taxon>
        <taxon>Spermatophyta</taxon>
        <taxon>Magnoliopsida</taxon>
        <taxon>eudicotyledons</taxon>
        <taxon>Gunneridae</taxon>
        <taxon>Pentapetalae</taxon>
        <taxon>rosids</taxon>
        <taxon>fabids</taxon>
        <taxon>Fabales</taxon>
        <taxon>Fabaceae</taxon>
        <taxon>Papilionoideae</taxon>
        <taxon>50 kb inversion clade</taxon>
        <taxon>NPAAA clade</taxon>
        <taxon>Hologalegina</taxon>
        <taxon>IRL clade</taxon>
        <taxon>Fabeae</taxon>
        <taxon>Pisum</taxon>
    </lineage>
</organism>
<sequence length="230" mass="24243">MSSTTLSPTTPSQLCSGKSGISCPSIALLVKPTRTQMTGRGNKGMKITCQATSIPADRVPDMSKRKTLNLLLLGALSLPTAGMLVPYGSFLVPPGSGSSTGGTVAKDAVGNDVVATEWLKTHAPGDRTLTQGLKGDPTYLVVEKDRTLATFAINAVCTHLGCVVPFNQAENKFICPCHGSQYNDQGRVVRGPAPLSLALAHCDVGVEDGKVVFVPWVETDFRTGDAPWWS</sequence>